<feature type="chain" id="PRO_0000247964" description="Transmembrane protein 222">
    <location>
        <begin position="1"/>
        <end position="208"/>
    </location>
</feature>
<feature type="topological domain" description="Extracellular" evidence="2">
    <location>
        <begin position="1"/>
        <end position="55"/>
    </location>
</feature>
<feature type="transmembrane region" description="Helical" evidence="2">
    <location>
        <begin position="56"/>
        <end position="76"/>
    </location>
</feature>
<feature type="topological domain" description="Cytoplasmic" evidence="2">
    <location>
        <begin position="77"/>
        <end position="164"/>
    </location>
</feature>
<feature type="transmembrane region" description="Helical" evidence="2">
    <location>
        <begin position="165"/>
        <end position="185"/>
    </location>
</feature>
<feature type="topological domain" description="Extracellular" evidence="2">
    <location>
        <position position="186"/>
    </location>
</feature>
<feature type="transmembrane region" description="Helical" evidence="2">
    <location>
        <begin position="187"/>
        <end position="207"/>
    </location>
</feature>
<feature type="topological domain" description="Cytoplasmic" evidence="2">
    <location>
        <position position="208"/>
    </location>
</feature>
<feature type="region of interest" description="Disordered" evidence="3">
    <location>
        <begin position="1"/>
        <end position="34"/>
    </location>
</feature>
<protein>
    <recommendedName>
        <fullName>Transmembrane protein 222</fullName>
    </recommendedName>
</protein>
<evidence type="ECO:0000250" key="1">
    <source>
        <dbReference type="UniProtKB" id="Q9H0R3"/>
    </source>
</evidence>
<evidence type="ECO:0000255" key="2"/>
<evidence type="ECO:0000256" key="3">
    <source>
        <dbReference type="SAM" id="MobiDB-lite"/>
    </source>
</evidence>
<evidence type="ECO:0000305" key="4"/>
<comment type="subcellular location">
    <subcellularLocation>
        <location evidence="4">Membrane</location>
        <topology evidence="4">Multi-pass membrane protein</topology>
    </subcellularLocation>
    <subcellularLocation>
        <location evidence="1">Cell projection</location>
        <location evidence="1">Dendrite</location>
    </subcellularLocation>
</comment>
<comment type="sequence caution" evidence="4">
    <conflict type="frameshift">
        <sequence resource="EMBL-CDS" id="BAB30776"/>
    </conflict>
</comment>
<reference key="1">
    <citation type="journal article" date="2005" name="Science">
        <title>The transcriptional landscape of the mammalian genome.</title>
        <authorList>
            <person name="Carninci P."/>
            <person name="Kasukawa T."/>
            <person name="Katayama S."/>
            <person name="Gough J."/>
            <person name="Frith M.C."/>
            <person name="Maeda N."/>
            <person name="Oyama R."/>
            <person name="Ravasi T."/>
            <person name="Lenhard B."/>
            <person name="Wells C."/>
            <person name="Kodzius R."/>
            <person name="Shimokawa K."/>
            <person name="Bajic V.B."/>
            <person name="Brenner S.E."/>
            <person name="Batalov S."/>
            <person name="Forrest A.R."/>
            <person name="Zavolan M."/>
            <person name="Davis M.J."/>
            <person name="Wilming L.G."/>
            <person name="Aidinis V."/>
            <person name="Allen J.E."/>
            <person name="Ambesi-Impiombato A."/>
            <person name="Apweiler R."/>
            <person name="Aturaliya R.N."/>
            <person name="Bailey T.L."/>
            <person name="Bansal M."/>
            <person name="Baxter L."/>
            <person name="Beisel K.W."/>
            <person name="Bersano T."/>
            <person name="Bono H."/>
            <person name="Chalk A.M."/>
            <person name="Chiu K.P."/>
            <person name="Choudhary V."/>
            <person name="Christoffels A."/>
            <person name="Clutterbuck D.R."/>
            <person name="Crowe M.L."/>
            <person name="Dalla E."/>
            <person name="Dalrymple B.P."/>
            <person name="de Bono B."/>
            <person name="Della Gatta G."/>
            <person name="di Bernardo D."/>
            <person name="Down T."/>
            <person name="Engstrom P."/>
            <person name="Fagiolini M."/>
            <person name="Faulkner G."/>
            <person name="Fletcher C.F."/>
            <person name="Fukushima T."/>
            <person name="Furuno M."/>
            <person name="Futaki S."/>
            <person name="Gariboldi M."/>
            <person name="Georgii-Hemming P."/>
            <person name="Gingeras T.R."/>
            <person name="Gojobori T."/>
            <person name="Green R.E."/>
            <person name="Gustincich S."/>
            <person name="Harbers M."/>
            <person name="Hayashi Y."/>
            <person name="Hensch T.K."/>
            <person name="Hirokawa N."/>
            <person name="Hill D."/>
            <person name="Huminiecki L."/>
            <person name="Iacono M."/>
            <person name="Ikeo K."/>
            <person name="Iwama A."/>
            <person name="Ishikawa T."/>
            <person name="Jakt M."/>
            <person name="Kanapin A."/>
            <person name="Katoh M."/>
            <person name="Kawasawa Y."/>
            <person name="Kelso J."/>
            <person name="Kitamura H."/>
            <person name="Kitano H."/>
            <person name="Kollias G."/>
            <person name="Krishnan S.P."/>
            <person name="Kruger A."/>
            <person name="Kummerfeld S.K."/>
            <person name="Kurochkin I.V."/>
            <person name="Lareau L.F."/>
            <person name="Lazarevic D."/>
            <person name="Lipovich L."/>
            <person name="Liu J."/>
            <person name="Liuni S."/>
            <person name="McWilliam S."/>
            <person name="Madan Babu M."/>
            <person name="Madera M."/>
            <person name="Marchionni L."/>
            <person name="Matsuda H."/>
            <person name="Matsuzawa S."/>
            <person name="Miki H."/>
            <person name="Mignone F."/>
            <person name="Miyake S."/>
            <person name="Morris K."/>
            <person name="Mottagui-Tabar S."/>
            <person name="Mulder N."/>
            <person name="Nakano N."/>
            <person name="Nakauchi H."/>
            <person name="Ng P."/>
            <person name="Nilsson R."/>
            <person name="Nishiguchi S."/>
            <person name="Nishikawa S."/>
            <person name="Nori F."/>
            <person name="Ohara O."/>
            <person name="Okazaki Y."/>
            <person name="Orlando V."/>
            <person name="Pang K.C."/>
            <person name="Pavan W.J."/>
            <person name="Pavesi G."/>
            <person name="Pesole G."/>
            <person name="Petrovsky N."/>
            <person name="Piazza S."/>
            <person name="Reed J."/>
            <person name="Reid J.F."/>
            <person name="Ring B.Z."/>
            <person name="Ringwald M."/>
            <person name="Rost B."/>
            <person name="Ruan Y."/>
            <person name="Salzberg S.L."/>
            <person name="Sandelin A."/>
            <person name="Schneider C."/>
            <person name="Schoenbach C."/>
            <person name="Sekiguchi K."/>
            <person name="Semple C.A."/>
            <person name="Seno S."/>
            <person name="Sessa L."/>
            <person name="Sheng Y."/>
            <person name="Shibata Y."/>
            <person name="Shimada H."/>
            <person name="Shimada K."/>
            <person name="Silva D."/>
            <person name="Sinclair B."/>
            <person name="Sperling S."/>
            <person name="Stupka E."/>
            <person name="Sugiura K."/>
            <person name="Sultana R."/>
            <person name="Takenaka Y."/>
            <person name="Taki K."/>
            <person name="Tammoja K."/>
            <person name="Tan S.L."/>
            <person name="Tang S."/>
            <person name="Taylor M.S."/>
            <person name="Tegner J."/>
            <person name="Teichmann S.A."/>
            <person name="Ueda H.R."/>
            <person name="van Nimwegen E."/>
            <person name="Verardo R."/>
            <person name="Wei C.L."/>
            <person name="Yagi K."/>
            <person name="Yamanishi H."/>
            <person name="Zabarovsky E."/>
            <person name="Zhu S."/>
            <person name="Zimmer A."/>
            <person name="Hide W."/>
            <person name="Bult C."/>
            <person name="Grimmond S.M."/>
            <person name="Teasdale R.D."/>
            <person name="Liu E.T."/>
            <person name="Brusic V."/>
            <person name="Quackenbush J."/>
            <person name="Wahlestedt C."/>
            <person name="Mattick J.S."/>
            <person name="Hume D.A."/>
            <person name="Kai C."/>
            <person name="Sasaki D."/>
            <person name="Tomaru Y."/>
            <person name="Fukuda S."/>
            <person name="Kanamori-Katayama M."/>
            <person name="Suzuki M."/>
            <person name="Aoki J."/>
            <person name="Arakawa T."/>
            <person name="Iida J."/>
            <person name="Imamura K."/>
            <person name="Itoh M."/>
            <person name="Kato T."/>
            <person name="Kawaji H."/>
            <person name="Kawagashira N."/>
            <person name="Kawashima T."/>
            <person name="Kojima M."/>
            <person name="Kondo S."/>
            <person name="Konno H."/>
            <person name="Nakano K."/>
            <person name="Ninomiya N."/>
            <person name="Nishio T."/>
            <person name="Okada M."/>
            <person name="Plessy C."/>
            <person name="Shibata K."/>
            <person name="Shiraki T."/>
            <person name="Suzuki S."/>
            <person name="Tagami M."/>
            <person name="Waki K."/>
            <person name="Watahiki A."/>
            <person name="Okamura-Oho Y."/>
            <person name="Suzuki H."/>
            <person name="Kawai J."/>
            <person name="Hayashizaki Y."/>
        </authorList>
    </citation>
    <scope>NUCLEOTIDE SEQUENCE [LARGE SCALE MRNA]</scope>
    <source>
        <strain>C57BL/6J</strain>
        <tissue>Embryo</tissue>
        <tissue>Urinary bladder</tissue>
    </source>
</reference>
<reference key="2">
    <citation type="journal article" date="2009" name="PLoS Biol.">
        <title>Lineage-specific biology revealed by a finished genome assembly of the mouse.</title>
        <authorList>
            <person name="Church D.M."/>
            <person name="Goodstadt L."/>
            <person name="Hillier L.W."/>
            <person name="Zody M.C."/>
            <person name="Goldstein S."/>
            <person name="She X."/>
            <person name="Bult C.J."/>
            <person name="Agarwala R."/>
            <person name="Cherry J.L."/>
            <person name="DiCuccio M."/>
            <person name="Hlavina W."/>
            <person name="Kapustin Y."/>
            <person name="Meric P."/>
            <person name="Maglott D."/>
            <person name="Birtle Z."/>
            <person name="Marques A.C."/>
            <person name="Graves T."/>
            <person name="Zhou S."/>
            <person name="Teague B."/>
            <person name="Potamousis K."/>
            <person name="Churas C."/>
            <person name="Place M."/>
            <person name="Herschleb J."/>
            <person name="Runnheim R."/>
            <person name="Forrest D."/>
            <person name="Amos-Landgraf J."/>
            <person name="Schwartz D.C."/>
            <person name="Cheng Z."/>
            <person name="Lindblad-Toh K."/>
            <person name="Eichler E.E."/>
            <person name="Ponting C.P."/>
        </authorList>
    </citation>
    <scope>NUCLEOTIDE SEQUENCE [LARGE SCALE GENOMIC DNA]</scope>
    <source>
        <strain>C57BL/6J</strain>
    </source>
</reference>
<reference key="3">
    <citation type="journal article" date="2004" name="Genome Res.">
        <title>The status, quality, and expansion of the NIH full-length cDNA project: the Mammalian Gene Collection (MGC).</title>
        <authorList>
            <consortium name="The MGC Project Team"/>
        </authorList>
    </citation>
    <scope>NUCLEOTIDE SEQUENCE [LARGE SCALE MRNA]</scope>
    <source>
        <strain>FVB/N</strain>
        <tissue>Mammary tumor</tissue>
    </source>
</reference>
<reference key="4">
    <citation type="journal article" date="2010" name="Cell">
        <title>A tissue-specific atlas of mouse protein phosphorylation and expression.</title>
        <authorList>
            <person name="Huttlin E.L."/>
            <person name="Jedrychowski M.P."/>
            <person name="Elias J.E."/>
            <person name="Goswami T."/>
            <person name="Rad R."/>
            <person name="Beausoleil S.A."/>
            <person name="Villen J."/>
            <person name="Haas W."/>
            <person name="Sowa M.E."/>
            <person name="Gygi S.P."/>
        </authorList>
    </citation>
    <scope>IDENTIFICATION BY MASS SPECTROMETRY [LARGE SCALE ANALYSIS]</scope>
    <source>
        <tissue>Brain</tissue>
    </source>
</reference>
<name>TM222_MOUSE</name>
<keyword id="KW-0966">Cell projection</keyword>
<keyword id="KW-0472">Membrane</keyword>
<keyword id="KW-1185">Reference proteome</keyword>
<keyword id="KW-0812">Transmembrane</keyword>
<keyword id="KW-1133">Transmembrane helix</keyword>
<dbReference type="EMBL" id="AK017503">
    <property type="protein sequence ID" value="BAB30776.1"/>
    <property type="status" value="ALT_FRAME"/>
    <property type="molecule type" value="mRNA"/>
</dbReference>
<dbReference type="EMBL" id="AK079189">
    <property type="protein sequence ID" value="BAC37573.1"/>
    <property type="molecule type" value="mRNA"/>
</dbReference>
<dbReference type="EMBL" id="AL671882">
    <property type="status" value="NOT_ANNOTATED_CDS"/>
    <property type="molecule type" value="Genomic_DNA"/>
</dbReference>
<dbReference type="EMBL" id="BC037609">
    <property type="protein sequence ID" value="AAH37609.2"/>
    <property type="molecule type" value="mRNA"/>
</dbReference>
<dbReference type="CCDS" id="CCDS51321.1"/>
<dbReference type="RefSeq" id="NP_079943.2">
    <property type="nucleotide sequence ID" value="NM_025667.3"/>
</dbReference>
<dbReference type="FunCoup" id="Q8BVA2">
    <property type="interactions" value="252"/>
</dbReference>
<dbReference type="STRING" id="10090.ENSMUSP00000101527"/>
<dbReference type="iPTMnet" id="Q8BVA2"/>
<dbReference type="PhosphoSitePlus" id="Q8BVA2"/>
<dbReference type="SwissPalm" id="Q8BVA2"/>
<dbReference type="PaxDb" id="10090-ENSMUSP00000101527"/>
<dbReference type="PeptideAtlas" id="Q8BVA2"/>
<dbReference type="ProteomicsDB" id="259408"/>
<dbReference type="Pumba" id="Q8BVA2"/>
<dbReference type="Antibodypedia" id="54779">
    <property type="antibodies" value="91 antibodies from 14 providers"/>
</dbReference>
<dbReference type="Ensembl" id="ENSMUST00000105907.9">
    <property type="protein sequence ID" value="ENSMUSP00000101527.3"/>
    <property type="gene ID" value="ENSMUSG00000028857.17"/>
</dbReference>
<dbReference type="GeneID" id="52174"/>
<dbReference type="KEGG" id="mmu:52174"/>
<dbReference type="UCSC" id="uc008vcp.1">
    <property type="organism name" value="mouse"/>
</dbReference>
<dbReference type="AGR" id="MGI:1098568"/>
<dbReference type="CTD" id="84065"/>
<dbReference type="MGI" id="MGI:1098568">
    <property type="gene designation" value="Tmem222"/>
</dbReference>
<dbReference type="VEuPathDB" id="HostDB:ENSMUSG00000028857"/>
<dbReference type="eggNOG" id="KOG3150">
    <property type="taxonomic scope" value="Eukaryota"/>
</dbReference>
<dbReference type="GeneTree" id="ENSGT00390000007371"/>
<dbReference type="HOGENOM" id="CLU_075672_1_1_1"/>
<dbReference type="InParanoid" id="Q8BVA2"/>
<dbReference type="OMA" id="GKMKQFH"/>
<dbReference type="OrthoDB" id="267284at2759"/>
<dbReference type="PhylomeDB" id="Q8BVA2"/>
<dbReference type="TreeFam" id="TF105899"/>
<dbReference type="BioGRID-ORCS" id="52174">
    <property type="hits" value="2 hits in 77 CRISPR screens"/>
</dbReference>
<dbReference type="ChiTaRS" id="Tmem222">
    <property type="organism name" value="mouse"/>
</dbReference>
<dbReference type="PRO" id="PR:Q8BVA2"/>
<dbReference type="Proteomes" id="UP000000589">
    <property type="component" value="Chromosome 4"/>
</dbReference>
<dbReference type="RNAct" id="Q8BVA2">
    <property type="molecule type" value="protein"/>
</dbReference>
<dbReference type="Bgee" id="ENSMUSG00000028857">
    <property type="expression patterns" value="Expressed in embryonic brain and 270 other cell types or tissues"/>
</dbReference>
<dbReference type="ExpressionAtlas" id="Q8BVA2">
    <property type="expression patterns" value="baseline and differential"/>
</dbReference>
<dbReference type="GO" id="GO:0030425">
    <property type="term" value="C:dendrite"/>
    <property type="evidence" value="ECO:0000250"/>
    <property type="project" value="UniProtKB"/>
</dbReference>
<dbReference type="GO" id="GO:0016020">
    <property type="term" value="C:membrane"/>
    <property type="evidence" value="ECO:0007669"/>
    <property type="project" value="UniProtKB-SubCell"/>
</dbReference>
<dbReference type="InterPro" id="IPR008496">
    <property type="entry name" value="TMEM222/RTE1"/>
</dbReference>
<dbReference type="PANTHER" id="PTHR20921">
    <property type="entry name" value="TRANSMEMBRANE PROTEIN 222"/>
    <property type="match status" value="1"/>
</dbReference>
<dbReference type="PANTHER" id="PTHR20921:SF0">
    <property type="entry name" value="TRANSMEMBRANE PROTEIN 222"/>
    <property type="match status" value="1"/>
</dbReference>
<dbReference type="Pfam" id="PF05608">
    <property type="entry name" value="RTE1"/>
    <property type="match status" value="1"/>
</dbReference>
<sequence length="208" mass="23180">MAEAEGSSPLLLQPPPPPPRMAEVETPTGAETDMKQYHGSGGVVMDVERSRFPYCVVWTPIPVLTWFFPIIGHMGICTSAGVIRDFAGPYFVSEDNMAFGKPAKFWKLDPGQVYASGPNAWDTAVHDASEEYKHRMHNLCCDNCHSHVALALNLMRYNNSTNWNMVTLCCFCLIYGKYVSVGAFVKTWLPFVLLLGIILTVSLVFNLR</sequence>
<accession>Q8BVA2</accession>
<accession>A2AE96</accession>
<accession>Q8CI41</accession>
<accession>Q9CYN3</accession>
<proteinExistence type="evidence at protein level"/>
<gene>
    <name type="primary">Tmem222</name>
    <name type="synonym">D4Ertd196e</name>
</gene>
<organism>
    <name type="scientific">Mus musculus</name>
    <name type="common">Mouse</name>
    <dbReference type="NCBI Taxonomy" id="10090"/>
    <lineage>
        <taxon>Eukaryota</taxon>
        <taxon>Metazoa</taxon>
        <taxon>Chordata</taxon>
        <taxon>Craniata</taxon>
        <taxon>Vertebrata</taxon>
        <taxon>Euteleostomi</taxon>
        <taxon>Mammalia</taxon>
        <taxon>Eutheria</taxon>
        <taxon>Euarchontoglires</taxon>
        <taxon>Glires</taxon>
        <taxon>Rodentia</taxon>
        <taxon>Myomorpha</taxon>
        <taxon>Muroidea</taxon>
        <taxon>Muridae</taxon>
        <taxon>Murinae</taxon>
        <taxon>Mus</taxon>
        <taxon>Mus</taxon>
    </lineage>
</organism>